<protein>
    <recommendedName>
        <fullName evidence="1">3-dehydroquinate synthase</fullName>
        <shortName evidence="1">DHQS</shortName>
        <ecNumber evidence="1">4.2.3.4</ecNumber>
    </recommendedName>
</protein>
<name>AROB_ALKOO</name>
<keyword id="KW-0028">Amino-acid biosynthesis</keyword>
<keyword id="KW-0057">Aromatic amino acid biosynthesis</keyword>
<keyword id="KW-0170">Cobalt</keyword>
<keyword id="KW-0963">Cytoplasm</keyword>
<keyword id="KW-0456">Lyase</keyword>
<keyword id="KW-0479">Metal-binding</keyword>
<keyword id="KW-0520">NAD</keyword>
<keyword id="KW-0547">Nucleotide-binding</keyword>
<keyword id="KW-1185">Reference proteome</keyword>
<keyword id="KW-0862">Zinc</keyword>
<gene>
    <name evidence="1" type="primary">aroB</name>
    <name type="ordered locus">Clos_1358</name>
</gene>
<accession>A8MH15</accession>
<reference key="1">
    <citation type="submission" date="2007-10" db="EMBL/GenBank/DDBJ databases">
        <title>Complete genome of Alkaliphilus oremlandii OhILAs.</title>
        <authorList>
            <person name="Copeland A."/>
            <person name="Lucas S."/>
            <person name="Lapidus A."/>
            <person name="Barry K."/>
            <person name="Detter J.C."/>
            <person name="Glavina del Rio T."/>
            <person name="Hammon N."/>
            <person name="Israni S."/>
            <person name="Dalin E."/>
            <person name="Tice H."/>
            <person name="Pitluck S."/>
            <person name="Chain P."/>
            <person name="Malfatti S."/>
            <person name="Shin M."/>
            <person name="Vergez L."/>
            <person name="Schmutz J."/>
            <person name="Larimer F."/>
            <person name="Land M."/>
            <person name="Hauser L."/>
            <person name="Kyrpides N."/>
            <person name="Mikhailova N."/>
            <person name="Stolz J.F."/>
            <person name="Dawson A."/>
            <person name="Fisher E."/>
            <person name="Crable B."/>
            <person name="Perera E."/>
            <person name="Lisak J."/>
            <person name="Ranganathan M."/>
            <person name="Basu P."/>
            <person name="Richardson P."/>
        </authorList>
    </citation>
    <scope>NUCLEOTIDE SEQUENCE [LARGE SCALE GENOMIC DNA]</scope>
    <source>
        <strain>OhILAs</strain>
    </source>
</reference>
<evidence type="ECO:0000255" key="1">
    <source>
        <dbReference type="HAMAP-Rule" id="MF_00110"/>
    </source>
</evidence>
<proteinExistence type="inferred from homology"/>
<dbReference type="EC" id="4.2.3.4" evidence="1"/>
<dbReference type="EMBL" id="CP000853">
    <property type="protein sequence ID" value="ABW18902.1"/>
    <property type="molecule type" value="Genomic_DNA"/>
</dbReference>
<dbReference type="RefSeq" id="WP_012159214.1">
    <property type="nucleotide sequence ID" value="NC_009922.1"/>
</dbReference>
<dbReference type="SMR" id="A8MH15"/>
<dbReference type="STRING" id="350688.Clos_1358"/>
<dbReference type="KEGG" id="aoe:Clos_1358"/>
<dbReference type="eggNOG" id="COG0337">
    <property type="taxonomic scope" value="Bacteria"/>
</dbReference>
<dbReference type="HOGENOM" id="CLU_001201_0_1_9"/>
<dbReference type="OrthoDB" id="9806583at2"/>
<dbReference type="UniPathway" id="UPA00053">
    <property type="reaction ID" value="UER00085"/>
</dbReference>
<dbReference type="Proteomes" id="UP000000269">
    <property type="component" value="Chromosome"/>
</dbReference>
<dbReference type="GO" id="GO:0005737">
    <property type="term" value="C:cytoplasm"/>
    <property type="evidence" value="ECO:0007669"/>
    <property type="project" value="UniProtKB-SubCell"/>
</dbReference>
<dbReference type="GO" id="GO:0003856">
    <property type="term" value="F:3-dehydroquinate synthase activity"/>
    <property type="evidence" value="ECO:0007669"/>
    <property type="project" value="UniProtKB-UniRule"/>
</dbReference>
<dbReference type="GO" id="GO:0046872">
    <property type="term" value="F:metal ion binding"/>
    <property type="evidence" value="ECO:0007669"/>
    <property type="project" value="UniProtKB-KW"/>
</dbReference>
<dbReference type="GO" id="GO:0000166">
    <property type="term" value="F:nucleotide binding"/>
    <property type="evidence" value="ECO:0007669"/>
    <property type="project" value="UniProtKB-KW"/>
</dbReference>
<dbReference type="GO" id="GO:0008652">
    <property type="term" value="P:amino acid biosynthetic process"/>
    <property type="evidence" value="ECO:0007669"/>
    <property type="project" value="UniProtKB-KW"/>
</dbReference>
<dbReference type="GO" id="GO:0009073">
    <property type="term" value="P:aromatic amino acid family biosynthetic process"/>
    <property type="evidence" value="ECO:0007669"/>
    <property type="project" value="UniProtKB-KW"/>
</dbReference>
<dbReference type="GO" id="GO:0009423">
    <property type="term" value="P:chorismate biosynthetic process"/>
    <property type="evidence" value="ECO:0007669"/>
    <property type="project" value="UniProtKB-UniRule"/>
</dbReference>
<dbReference type="CDD" id="cd08195">
    <property type="entry name" value="DHQS"/>
    <property type="match status" value="1"/>
</dbReference>
<dbReference type="FunFam" id="3.40.50.1970:FF:000007">
    <property type="entry name" value="Pentafunctional AROM polypeptide"/>
    <property type="match status" value="1"/>
</dbReference>
<dbReference type="Gene3D" id="3.40.50.1970">
    <property type="match status" value="1"/>
</dbReference>
<dbReference type="Gene3D" id="1.20.1090.10">
    <property type="entry name" value="Dehydroquinate synthase-like - alpha domain"/>
    <property type="match status" value="1"/>
</dbReference>
<dbReference type="HAMAP" id="MF_00110">
    <property type="entry name" value="DHQ_synthase"/>
    <property type="match status" value="1"/>
</dbReference>
<dbReference type="InterPro" id="IPR050071">
    <property type="entry name" value="Dehydroquinate_synthase"/>
</dbReference>
<dbReference type="InterPro" id="IPR016037">
    <property type="entry name" value="DHQ_synth_AroB"/>
</dbReference>
<dbReference type="InterPro" id="IPR030963">
    <property type="entry name" value="DHQ_synth_fam"/>
</dbReference>
<dbReference type="InterPro" id="IPR030960">
    <property type="entry name" value="DHQS/DOIS_N"/>
</dbReference>
<dbReference type="InterPro" id="IPR056179">
    <property type="entry name" value="DHQS_C"/>
</dbReference>
<dbReference type="NCBIfam" id="TIGR01357">
    <property type="entry name" value="aroB"/>
    <property type="match status" value="1"/>
</dbReference>
<dbReference type="PANTHER" id="PTHR43622">
    <property type="entry name" value="3-DEHYDROQUINATE SYNTHASE"/>
    <property type="match status" value="1"/>
</dbReference>
<dbReference type="PANTHER" id="PTHR43622:SF1">
    <property type="entry name" value="3-DEHYDROQUINATE SYNTHASE"/>
    <property type="match status" value="1"/>
</dbReference>
<dbReference type="Pfam" id="PF01761">
    <property type="entry name" value="DHQ_synthase"/>
    <property type="match status" value="1"/>
</dbReference>
<dbReference type="Pfam" id="PF24621">
    <property type="entry name" value="DHQS_C"/>
    <property type="match status" value="1"/>
</dbReference>
<dbReference type="PIRSF" id="PIRSF001455">
    <property type="entry name" value="DHQ_synth"/>
    <property type="match status" value="1"/>
</dbReference>
<dbReference type="SUPFAM" id="SSF56796">
    <property type="entry name" value="Dehydroquinate synthase-like"/>
    <property type="match status" value="1"/>
</dbReference>
<feature type="chain" id="PRO_1000094451" description="3-dehydroquinate synthase">
    <location>
        <begin position="1"/>
        <end position="363"/>
    </location>
</feature>
<feature type="binding site" evidence="1">
    <location>
        <begin position="70"/>
        <end position="75"/>
    </location>
    <ligand>
        <name>NAD(+)</name>
        <dbReference type="ChEBI" id="CHEBI:57540"/>
    </ligand>
</feature>
<feature type="binding site" evidence="1">
    <location>
        <begin position="104"/>
        <end position="108"/>
    </location>
    <ligand>
        <name>NAD(+)</name>
        <dbReference type="ChEBI" id="CHEBI:57540"/>
    </ligand>
</feature>
<feature type="binding site" evidence="1">
    <location>
        <begin position="128"/>
        <end position="129"/>
    </location>
    <ligand>
        <name>NAD(+)</name>
        <dbReference type="ChEBI" id="CHEBI:57540"/>
    </ligand>
</feature>
<feature type="binding site" evidence="1">
    <location>
        <position position="141"/>
    </location>
    <ligand>
        <name>NAD(+)</name>
        <dbReference type="ChEBI" id="CHEBI:57540"/>
    </ligand>
</feature>
<feature type="binding site" evidence="1">
    <location>
        <position position="150"/>
    </location>
    <ligand>
        <name>NAD(+)</name>
        <dbReference type="ChEBI" id="CHEBI:57540"/>
    </ligand>
</feature>
<feature type="binding site" evidence="1">
    <location>
        <begin position="168"/>
        <end position="171"/>
    </location>
    <ligand>
        <name>NAD(+)</name>
        <dbReference type="ChEBI" id="CHEBI:57540"/>
    </ligand>
</feature>
<feature type="binding site" evidence="1">
    <location>
        <position position="183"/>
    </location>
    <ligand>
        <name>Zn(2+)</name>
        <dbReference type="ChEBI" id="CHEBI:29105"/>
    </ligand>
</feature>
<feature type="binding site" evidence="1">
    <location>
        <position position="245"/>
    </location>
    <ligand>
        <name>Zn(2+)</name>
        <dbReference type="ChEBI" id="CHEBI:29105"/>
    </ligand>
</feature>
<feature type="binding site" evidence="1">
    <location>
        <position position="262"/>
    </location>
    <ligand>
        <name>Zn(2+)</name>
        <dbReference type="ChEBI" id="CHEBI:29105"/>
    </ligand>
</feature>
<sequence length="363" mass="41473">MLETKINLGKVTYPLYMGRNLLDNLDVLIEDHIEGKTVFLLTEDNVFKYYGNPLLEKLKSSRFKYHIIESGETSKSIDTYGEIIHELTENKQDRDTIILALGGGVIGDLGGFVASTYMRGVDLIHIPTTLLAQIDSSIGGKTGINFGAIKNLLGTFYHPRAVYMDLSTLDTLPKREYIAAFGEIIKYGLIGDYDLLLDLDQHHRAYLDRTRSVDDLILKCIRMKENIVLKDERDSGMRQVLNLGHTFAHGLESSTNFQKFLHGEAVALGLIFASNLSLKLKFIAEEYHQFVNQLIYKYFSDRYILQLDTEGIVEAMTMDKKNKEHRITFILPVDKEKVEIFKNIPIEIVEESLEEIKYGFRCK</sequence>
<comment type="function">
    <text evidence="1">Catalyzes the conversion of 3-deoxy-D-arabino-heptulosonate 7-phosphate (DAHP) to dehydroquinate (DHQ).</text>
</comment>
<comment type="catalytic activity">
    <reaction evidence="1">
        <text>7-phospho-2-dehydro-3-deoxy-D-arabino-heptonate = 3-dehydroquinate + phosphate</text>
        <dbReference type="Rhea" id="RHEA:21968"/>
        <dbReference type="ChEBI" id="CHEBI:32364"/>
        <dbReference type="ChEBI" id="CHEBI:43474"/>
        <dbReference type="ChEBI" id="CHEBI:58394"/>
        <dbReference type="EC" id="4.2.3.4"/>
    </reaction>
</comment>
<comment type="cofactor">
    <cofactor evidence="1">
        <name>Co(2+)</name>
        <dbReference type="ChEBI" id="CHEBI:48828"/>
    </cofactor>
    <cofactor evidence="1">
        <name>Zn(2+)</name>
        <dbReference type="ChEBI" id="CHEBI:29105"/>
    </cofactor>
    <text evidence="1">Binds 1 divalent metal cation per subunit. Can use either Co(2+) or Zn(2+).</text>
</comment>
<comment type="cofactor">
    <cofactor evidence="1">
        <name>NAD(+)</name>
        <dbReference type="ChEBI" id="CHEBI:57540"/>
    </cofactor>
</comment>
<comment type="pathway">
    <text evidence="1">Metabolic intermediate biosynthesis; chorismate biosynthesis; chorismate from D-erythrose 4-phosphate and phosphoenolpyruvate: step 2/7.</text>
</comment>
<comment type="subcellular location">
    <subcellularLocation>
        <location evidence="1">Cytoplasm</location>
    </subcellularLocation>
</comment>
<comment type="similarity">
    <text evidence="1">Belongs to the sugar phosphate cyclases superfamily. Dehydroquinate synthase family.</text>
</comment>
<organism>
    <name type="scientific">Alkaliphilus oremlandii (strain OhILAs)</name>
    <name type="common">Clostridium oremlandii (strain OhILAs)</name>
    <dbReference type="NCBI Taxonomy" id="350688"/>
    <lineage>
        <taxon>Bacteria</taxon>
        <taxon>Bacillati</taxon>
        <taxon>Bacillota</taxon>
        <taxon>Clostridia</taxon>
        <taxon>Peptostreptococcales</taxon>
        <taxon>Natronincolaceae</taxon>
        <taxon>Alkaliphilus</taxon>
    </lineage>
</organism>